<comment type="function">
    <text evidence="1">Transfers a phosphoglycerol residue from phosphatidylglycerol to the membrane-bound nascent glucan backbones.</text>
</comment>
<comment type="catalytic activity">
    <reaction evidence="1">
        <text>a phosphatidylglycerol + a membrane-derived-oligosaccharide D-glucose = a 1,2-diacyl-sn-glycerol + a membrane-derived-oligosaccharide 6-(glycerophospho)-D-glucose.</text>
        <dbReference type="EC" id="2.7.8.20"/>
    </reaction>
</comment>
<comment type="pathway">
    <text evidence="1">Glycan metabolism; osmoregulated periplasmic glucan (OPG) biosynthesis.</text>
</comment>
<comment type="subcellular location">
    <subcellularLocation>
        <location evidence="1">Cell inner membrane</location>
        <topology evidence="1">Multi-pass membrane protein</topology>
    </subcellularLocation>
</comment>
<comment type="similarity">
    <text evidence="1">Belongs to the OpgB family.</text>
</comment>
<sequence length="763" mass="85474">MSELLSFALFLASVLIYAWKAGRNTWWFAATLTVLGLFVVLNITLFASDYFTGDGINDAVLYTLTNSLTGAGVSKYILPGIGIVLGLAAVFGALGWILRRRRHHPHHFGYSLLALLLALGSVDASPAFRQITELVKSQSRDGDPDFTAYYKEPSKTIPDPKLNLVYIYGESLERTYFDNEVFPDLTPELGALKNEGLDFSHTQQLPGTDYTIAGMVASQCGIPLFAPFEGNASASVSSFFPQNICLGDILKNSGYQNYFVQGANLRFAGKDVFLKSHGFDHLYGSEELKSVVADPHYRNDWGFYDDTVLDEAWKKFEELSRSGQRFSLFTLTVDTHHPDGFISRTCNRKKYDFDGKPNQSFSAVSCSQENIATFINKIKASPWFKDTVIVVSSDHLAMNNTAWKYLNKQDRNNLFFVIRGDKPQQETLAVKRNTMDNGATVLDILGGDNYLGLGRSSLSGQSMSEIFLNIKEKTLAWKPDIIRLWKFPKEMKEFTIDQQKNMIAFSGSHFRLPLLLRVSDKRVEPLPESEYSAPLRFQLADFAPRDNFVWVDRCYKMAQLWAPELALSTDWCVSQGQLGGQQIVQHVDKAIWKGKTAFKDTVIDMARYKGNVDTLKIVDNDIRYKADSFIFNVAGAPEEVKQFSGISRPESWGRWSNAQLGDEVKIEYKHPLPKKFDLVITAKAYGNNASRPIPVRVGNEEQALVLGNEVTTTTLHFDNPTDADTLVIVPPEPVSTNEGNILGHSPRKLGIGMVEIKVVEREG</sequence>
<gene>
    <name evidence="1" type="primary">mdoB</name>
    <name evidence="1" type="synonym">opgB</name>
    <name type="ordered locus">ECP_4690</name>
</gene>
<organism>
    <name type="scientific">Escherichia coli O6:K15:H31 (strain 536 / UPEC)</name>
    <dbReference type="NCBI Taxonomy" id="362663"/>
    <lineage>
        <taxon>Bacteria</taxon>
        <taxon>Pseudomonadati</taxon>
        <taxon>Pseudomonadota</taxon>
        <taxon>Gammaproteobacteria</taxon>
        <taxon>Enterobacterales</taxon>
        <taxon>Enterobacteriaceae</taxon>
        <taxon>Escherichia</taxon>
    </lineage>
</organism>
<evidence type="ECO:0000255" key="1">
    <source>
        <dbReference type="HAMAP-Rule" id="MF_01070"/>
    </source>
</evidence>
<name>OPGB_ECOL5</name>
<accession>Q0T8V3</accession>
<reference key="1">
    <citation type="journal article" date="2006" name="Mol. Microbiol.">
        <title>Role of pathogenicity island-associated integrases in the genome plasticity of uropathogenic Escherichia coli strain 536.</title>
        <authorList>
            <person name="Hochhut B."/>
            <person name="Wilde C."/>
            <person name="Balling G."/>
            <person name="Middendorf B."/>
            <person name="Dobrindt U."/>
            <person name="Brzuszkiewicz E."/>
            <person name="Gottschalk G."/>
            <person name="Carniel E."/>
            <person name="Hacker J."/>
        </authorList>
    </citation>
    <scope>NUCLEOTIDE SEQUENCE [LARGE SCALE GENOMIC DNA]</scope>
    <source>
        <strain>536 / UPEC</strain>
    </source>
</reference>
<feature type="chain" id="PRO_1000064574" description="Phosphoglycerol transferase I">
    <location>
        <begin position="1"/>
        <end position="763"/>
    </location>
</feature>
<feature type="transmembrane region" description="Helical" evidence="1">
    <location>
        <begin position="1"/>
        <end position="21"/>
    </location>
</feature>
<feature type="transmembrane region" description="Helical" evidence="1">
    <location>
        <begin position="26"/>
        <end position="46"/>
    </location>
</feature>
<feature type="transmembrane region" description="Helical" evidence="1">
    <location>
        <begin position="77"/>
        <end position="97"/>
    </location>
</feature>
<feature type="transmembrane region" description="Helical" evidence="1">
    <location>
        <begin position="108"/>
        <end position="128"/>
    </location>
</feature>
<protein>
    <recommendedName>
        <fullName evidence="1">Phosphoglycerol transferase I</fullName>
        <ecNumber evidence="1">2.7.8.20</ecNumber>
    </recommendedName>
    <alternativeName>
        <fullName evidence="1">Phosphatidylglycerol--membrane-oligosaccharide glycerophosphotransferase</fullName>
    </alternativeName>
</protein>
<keyword id="KW-0997">Cell inner membrane</keyword>
<keyword id="KW-1003">Cell membrane</keyword>
<keyword id="KW-0472">Membrane</keyword>
<keyword id="KW-0808">Transferase</keyword>
<keyword id="KW-0812">Transmembrane</keyword>
<keyword id="KW-1133">Transmembrane helix</keyword>
<dbReference type="EC" id="2.7.8.20" evidence="1"/>
<dbReference type="EMBL" id="CP000247">
    <property type="protein sequence ID" value="ABG72626.1"/>
    <property type="molecule type" value="Genomic_DNA"/>
</dbReference>
<dbReference type="RefSeq" id="WP_001292636.1">
    <property type="nucleotide sequence ID" value="NC_008253.1"/>
</dbReference>
<dbReference type="SMR" id="Q0T8V3"/>
<dbReference type="KEGG" id="ecp:ECP_4690"/>
<dbReference type="HOGENOM" id="CLU_023986_1_0_6"/>
<dbReference type="UniPathway" id="UPA00637"/>
<dbReference type="Proteomes" id="UP000009182">
    <property type="component" value="Chromosome"/>
</dbReference>
<dbReference type="GO" id="GO:0005886">
    <property type="term" value="C:plasma membrane"/>
    <property type="evidence" value="ECO:0007669"/>
    <property type="project" value="UniProtKB-SubCell"/>
</dbReference>
<dbReference type="GO" id="GO:0008960">
    <property type="term" value="F:phosphatidylglycerol-membrane-oligosaccharide glycerophosphotransferase activity"/>
    <property type="evidence" value="ECO:0007669"/>
    <property type="project" value="UniProtKB-UniRule"/>
</dbReference>
<dbReference type="GO" id="GO:0009250">
    <property type="term" value="P:glucan biosynthetic process"/>
    <property type="evidence" value="ECO:0007669"/>
    <property type="project" value="UniProtKB-UniRule"/>
</dbReference>
<dbReference type="CDD" id="cd16015">
    <property type="entry name" value="LTA_synthase"/>
    <property type="match status" value="1"/>
</dbReference>
<dbReference type="FunFam" id="3.40.720.10:FF:000009">
    <property type="entry name" value="Phosphoglycerol transferase I"/>
    <property type="match status" value="1"/>
</dbReference>
<dbReference type="Gene3D" id="3.40.720.10">
    <property type="entry name" value="Alkaline Phosphatase, subunit A"/>
    <property type="match status" value="1"/>
</dbReference>
<dbReference type="HAMAP" id="MF_01070">
    <property type="entry name" value="MdoB_OpgB"/>
    <property type="match status" value="1"/>
</dbReference>
<dbReference type="InterPro" id="IPR017850">
    <property type="entry name" value="Alkaline_phosphatase_core_sf"/>
</dbReference>
<dbReference type="InterPro" id="IPR054288">
    <property type="entry name" value="DUF7024"/>
</dbReference>
<dbReference type="InterPro" id="IPR020881">
    <property type="entry name" value="OpgB"/>
</dbReference>
<dbReference type="InterPro" id="IPR050448">
    <property type="entry name" value="OpgB/LTA_synthase_biosynth"/>
</dbReference>
<dbReference type="InterPro" id="IPR000917">
    <property type="entry name" value="Sulfatase_N"/>
</dbReference>
<dbReference type="NCBIfam" id="NF003000">
    <property type="entry name" value="PRK03776.1"/>
    <property type="match status" value="1"/>
</dbReference>
<dbReference type="PANTHER" id="PTHR47371">
    <property type="entry name" value="LIPOTEICHOIC ACID SYNTHASE"/>
    <property type="match status" value="1"/>
</dbReference>
<dbReference type="PANTHER" id="PTHR47371:SF3">
    <property type="entry name" value="PHOSPHOGLYCEROL TRANSFERASE I"/>
    <property type="match status" value="1"/>
</dbReference>
<dbReference type="Pfam" id="PF22895">
    <property type="entry name" value="DUF7024"/>
    <property type="match status" value="1"/>
</dbReference>
<dbReference type="Pfam" id="PF00884">
    <property type="entry name" value="Sulfatase"/>
    <property type="match status" value="1"/>
</dbReference>
<dbReference type="SUPFAM" id="SSF53649">
    <property type="entry name" value="Alkaline phosphatase-like"/>
    <property type="match status" value="1"/>
</dbReference>
<proteinExistence type="inferred from homology"/>